<reference key="1">
    <citation type="journal article" date="2020" name="J. Agric. Food Chem.">
        <title>Expression and Characterization of a Methylated Galactose-Accommodating GH86 beta-Agarase from a Marine Bacterium.</title>
        <authorList>
            <person name="Cao S."/>
            <person name="Shen J."/>
            <person name="Zhang Y."/>
            <person name="Chang Y."/>
            <person name="Xue C."/>
        </authorList>
    </citation>
    <scope>NUCLEOTIDE SEQUENCE [MRNA]</scope>
    <scope>FUNCTION AS AN AGARASE</scope>
    <scope>CATALYTIC ACTIVITY</scope>
    <scope>ACTIVITY REGULATION</scope>
    <scope>BIOPHYSICOCHEMICAL PROPERTIES</scope>
    <source>
        <strain>OF219</strain>
    </source>
</reference>
<reference key="2">
    <citation type="journal article" date="2023" name="Carbohydr. Polym.">
        <title>The characteristic structure of funoran could be hydrolyzed by a GH86 family enzyme (Aga86A_Wa): Discovery of the funoran hydrolase.</title>
        <authorList>
            <person name="Zhang Y."/>
            <person name="Chen G."/>
            <person name="Shen J."/>
            <person name="Mei X."/>
            <person name="Liu G."/>
            <person name="Chang Y."/>
            <person name="Dong S."/>
            <person name="Feng Y."/>
            <person name="Wang Y."/>
            <person name="Xue C."/>
        </authorList>
    </citation>
    <scope>FUNCTION AS A FUNORANASE</scope>
    <scope>CATALYTIC ACTIVITY</scope>
    <scope>BIOPHYSICOCHEMICAL PROPERTIES</scope>
    <scope>DOMAIN</scope>
</reference>
<reference evidence="10" key="3">
    <citation type="journal article" date="2023" name="Carbohydr. Polym.">
        <title>Structural characterization on a beta-agarase Aga86A_Wa from Wenyingzhuangia aestuarii reveals the prevalent methyl-galactose accommodation capacity of GH86 enzymes at subsite -1.</title>
        <authorList>
            <person name="Zhang Y."/>
            <person name="Dong S."/>
            <person name="Chen G."/>
            <person name="Cao S."/>
            <person name="Shen J."/>
            <person name="Mei X."/>
            <person name="Cui Q."/>
            <person name="Feng Y."/>
            <person name="Chang Y."/>
            <person name="Wang Y."/>
            <person name="Xue C."/>
        </authorList>
    </citation>
    <scope>X-RAY CRYSTALLOGRAPHY (2.19 ANGSTROMS) OF 27-735</scope>
    <scope>DOMAIN</scope>
    <source>
        <strain>OF219</strain>
    </source>
</reference>
<organism>
    <name type="scientific">Wenyingzhuangia aestuarii</name>
    <dbReference type="NCBI Taxonomy" id="1647582"/>
    <lineage>
        <taxon>Bacteria</taxon>
        <taxon>Pseudomonadati</taxon>
        <taxon>Bacteroidota</taxon>
        <taxon>Flavobacteriia</taxon>
        <taxon>Flavobacteriales</taxon>
        <taxon>Flavobacteriaceae</taxon>
        <taxon>Wenyingzhuangia</taxon>
    </lineage>
</organism>
<gene>
    <name evidence="6" type="primary">aga86A</name>
</gene>
<sequence>MRVKSVYKKLSVSFILVMLSASQEVNSQAKVSVNLNVKHVVGGISEFDRTKYITIHANQIENEWDGDNFTSDLRDHFLNGFDVYLGRDTGGITWNLNNMQEDASRPGFANPSNIISKGINTRNNYASKTHLHVYENRKSNHVVAAQLHPFWTGESQIATKGTGWELASPTATGEYMGRYFNEFYGGNGEPVPSWIEVINEPAYEALGGKKNFTNSLQEIADFHVEVADAIRVQNPNLKIGGYTAAFPDFETGDFQRWINRDKLFIDVAGEKMDFWSWHLYDFPVIGGKEDIRSGSNVEATFDMHDHYSMLKLGHKKPYVISEYGAQTHDFRNEGWSSYRDWLFVRAQNSLMMSFMERPEDIAMAIPFTIVKAEWGFNTDKNLPYPARLMRKANEPESYTGEWVYTDRVKFYDLWKNVKGTRIDTKSTDLDIQVDAYVDGNKGYLILNNLESEETEITLDVFEKYDSSITNILKRHLTLSSNNVVIEEETFSSSISTVQLGAGSTMILEYTFANSLTIDETSTEEKYYADSYLQPIVASQPILFAVNNVVKSATYGEAVLRLGLGRDHGKSLKPIVKVNNTEVVVPDDWRGYDQADKGRFFGTIEIPVSYDLLTTNNTVSVEFPDSSGHVSSVIMQVFNFSSDIRTLSVNDVTASDTKTLLISPNPVKDGMLNMTIPAKLKNPIASIYNVSGSLLIKQSMKHSQTSIPVNLFDKGVYLLVLQDGSKKIGESKFVIQ</sequence>
<proteinExistence type="evidence at protein level"/>
<feature type="signal peptide" evidence="2">
    <location>
        <begin position="1"/>
        <end position="27"/>
    </location>
</feature>
<feature type="chain" id="PRO_0000461471" description="Funoran endo-beta-hydrolase">
    <location>
        <begin position="28"/>
        <end position="735"/>
    </location>
</feature>
<feature type="active site" description="Proton donor" evidence="1">
    <location>
        <position position="200"/>
    </location>
</feature>
<feature type="active site" description="Nucleophile" evidence="1">
    <location>
        <position position="322"/>
    </location>
</feature>
<feature type="strand" evidence="11">
    <location>
        <begin position="28"/>
        <end position="41"/>
    </location>
</feature>
<feature type="helix" evidence="11">
    <location>
        <begin position="49"/>
        <end position="52"/>
    </location>
</feature>
<feature type="strand" evidence="11">
    <location>
        <begin position="53"/>
        <end position="56"/>
    </location>
</feature>
<feature type="helix" evidence="11">
    <location>
        <begin position="62"/>
        <end position="64"/>
    </location>
</feature>
<feature type="strand" evidence="11">
    <location>
        <begin position="65"/>
        <end position="71"/>
    </location>
</feature>
<feature type="helix" evidence="11">
    <location>
        <begin position="73"/>
        <end position="78"/>
    </location>
</feature>
<feature type="turn" evidence="11">
    <location>
        <begin position="79"/>
        <end position="82"/>
    </location>
</feature>
<feature type="helix" evidence="11">
    <location>
        <begin position="90"/>
        <end position="97"/>
    </location>
</feature>
<feature type="helix" evidence="11">
    <location>
        <begin position="111"/>
        <end position="127"/>
    </location>
</feature>
<feature type="helix" evidence="11">
    <location>
        <begin position="129"/>
        <end position="137"/>
    </location>
</feature>
<feature type="strand" evidence="11">
    <location>
        <begin position="142"/>
        <end position="144"/>
    </location>
</feature>
<feature type="turn" evidence="11">
    <location>
        <begin position="148"/>
        <end position="150"/>
    </location>
</feature>
<feature type="turn" evidence="11">
    <location>
        <begin position="160"/>
        <end position="162"/>
    </location>
</feature>
<feature type="helix" evidence="11">
    <location>
        <begin position="169"/>
        <end position="182"/>
    </location>
</feature>
<feature type="strand" evidence="11">
    <location>
        <begin position="183"/>
        <end position="185"/>
    </location>
</feature>
<feature type="strand" evidence="11">
    <location>
        <begin position="193"/>
        <end position="201"/>
    </location>
</feature>
<feature type="helix" evidence="11">
    <location>
        <begin position="202"/>
        <end position="205"/>
    </location>
</feature>
<feature type="helix" evidence="11">
    <location>
        <begin position="217"/>
        <end position="233"/>
    </location>
</feature>
<feature type="strand" evidence="11">
    <location>
        <begin position="237"/>
        <end position="245"/>
    </location>
</feature>
<feature type="turn" evidence="11">
    <location>
        <begin position="251"/>
        <end position="254"/>
    </location>
</feature>
<feature type="helix" evidence="11">
    <location>
        <begin position="255"/>
        <end position="259"/>
    </location>
</feature>
<feature type="helix" evidence="11">
    <location>
        <begin position="261"/>
        <end position="268"/>
    </location>
</feature>
<feature type="helix" evidence="11">
    <location>
        <begin position="269"/>
        <end position="271"/>
    </location>
</feature>
<feature type="strand" evidence="11">
    <location>
        <begin position="273"/>
        <end position="285"/>
    </location>
</feature>
<feature type="strand" evidence="11">
    <location>
        <begin position="288"/>
        <end position="290"/>
    </location>
</feature>
<feature type="helix" evidence="11">
    <location>
        <begin position="295"/>
        <end position="312"/>
    </location>
</feature>
<feature type="strand" evidence="11">
    <location>
        <begin position="318"/>
        <end position="325"/>
    </location>
</feature>
<feature type="helix" evidence="11">
    <location>
        <begin position="328"/>
        <end position="330"/>
    </location>
</feature>
<feature type="helix" evidence="11">
    <location>
        <begin position="337"/>
        <end position="355"/>
    </location>
</feature>
<feature type="helix" evidence="11">
    <location>
        <begin position="358"/>
        <end position="360"/>
    </location>
</feature>
<feature type="strand" evidence="11">
    <location>
        <begin position="361"/>
        <end position="366"/>
    </location>
</feature>
<feature type="helix" evidence="11">
    <location>
        <begin position="373"/>
        <end position="375"/>
    </location>
</feature>
<feature type="turn" evidence="11">
    <location>
        <begin position="378"/>
        <end position="381"/>
    </location>
</feature>
<feature type="strand" evidence="11">
    <location>
        <begin position="385"/>
        <end position="391"/>
    </location>
</feature>
<feature type="turn" evidence="11">
    <location>
        <begin position="392"/>
        <end position="396"/>
    </location>
</feature>
<feature type="strand" evidence="11">
    <location>
        <begin position="402"/>
        <end position="404"/>
    </location>
</feature>
<feature type="helix" evidence="11">
    <location>
        <begin position="408"/>
        <end position="414"/>
    </location>
</feature>
<feature type="strand" evidence="11">
    <location>
        <begin position="419"/>
        <end position="428"/>
    </location>
</feature>
<feature type="strand" evidence="11">
    <location>
        <begin position="431"/>
        <end position="438"/>
    </location>
</feature>
<feature type="strand" evidence="11">
    <location>
        <begin position="441"/>
        <end position="448"/>
    </location>
</feature>
<feature type="strand" evidence="11">
    <location>
        <begin position="450"/>
        <end position="452"/>
    </location>
</feature>
<feature type="strand" evidence="11">
    <location>
        <begin position="454"/>
        <end position="461"/>
    </location>
</feature>
<feature type="strand" evidence="11">
    <location>
        <begin position="468"/>
        <end position="479"/>
    </location>
</feature>
<feature type="strand" evidence="11">
    <location>
        <begin position="482"/>
        <end position="492"/>
    </location>
</feature>
<feature type="strand" evidence="11">
    <location>
        <begin position="496"/>
        <end position="499"/>
    </location>
</feature>
<feature type="strand" evidence="11">
    <location>
        <begin position="504"/>
        <end position="513"/>
    </location>
</feature>
<feature type="strand" evidence="11">
    <location>
        <begin position="519"/>
        <end position="527"/>
    </location>
</feature>
<feature type="strand" evidence="11">
    <location>
        <begin position="541"/>
        <end position="545"/>
    </location>
</feature>
<feature type="strand" evidence="11">
    <location>
        <begin position="552"/>
        <end position="565"/>
    </location>
</feature>
<feature type="strand" evidence="11">
    <location>
        <begin position="574"/>
        <end position="577"/>
    </location>
</feature>
<feature type="strand" evidence="11">
    <location>
        <begin position="580"/>
        <end position="582"/>
    </location>
</feature>
<feature type="strand" evidence="11">
    <location>
        <begin position="596"/>
        <end position="608"/>
    </location>
</feature>
<feature type="turn" evidence="11">
    <location>
        <begin position="609"/>
        <end position="611"/>
    </location>
</feature>
<feature type="strand" evidence="11">
    <location>
        <begin position="614"/>
        <end position="621"/>
    </location>
</feature>
<feature type="strand" evidence="11">
    <location>
        <begin position="626"/>
        <end position="641"/>
    </location>
</feature>
<dbReference type="EC" id="3.2.1.222" evidence="5"/>
<dbReference type="EC" id="3.2.1.81" evidence="3"/>
<dbReference type="EMBL" id="MK522486">
    <property type="protein sequence ID" value="QDQ19054.1"/>
    <property type="molecule type" value="mRNA"/>
</dbReference>
<dbReference type="PDB" id="8H97">
    <property type="method" value="X-ray"/>
    <property type="resolution" value="2.19 A"/>
    <property type="chains" value="A=27-735"/>
</dbReference>
<dbReference type="PDBsum" id="8H97"/>
<dbReference type="SMR" id="A0A516RTC5"/>
<dbReference type="KEGG" id="ag:QDQ19054"/>
<dbReference type="GO" id="GO:0033916">
    <property type="term" value="F:beta-agarase activity"/>
    <property type="evidence" value="ECO:0007669"/>
    <property type="project" value="UniProtKB-EC"/>
</dbReference>
<dbReference type="CDD" id="cd21510">
    <property type="entry name" value="agarase_cat"/>
    <property type="match status" value="1"/>
</dbReference>
<dbReference type="Gene3D" id="2.60.120.1200">
    <property type="match status" value="1"/>
</dbReference>
<dbReference type="Gene3D" id="3.20.20.80">
    <property type="entry name" value="Glycosidases"/>
    <property type="match status" value="1"/>
</dbReference>
<dbReference type="InterPro" id="IPR041224">
    <property type="entry name" value="BPA_C"/>
</dbReference>
<dbReference type="InterPro" id="IPR017853">
    <property type="entry name" value="Glycoside_hydrolase_SF"/>
</dbReference>
<dbReference type="InterPro" id="IPR040527">
    <property type="entry name" value="Porphyrn_b-sand_dom_1"/>
</dbReference>
<dbReference type="InterPro" id="IPR026444">
    <property type="entry name" value="Secre_tail"/>
</dbReference>
<dbReference type="NCBIfam" id="TIGR04183">
    <property type="entry name" value="Por_Secre_tail"/>
    <property type="match status" value="1"/>
</dbReference>
<dbReference type="Pfam" id="PF18040">
    <property type="entry name" value="BPA_C"/>
    <property type="match status" value="1"/>
</dbReference>
<dbReference type="Pfam" id="PF18962">
    <property type="entry name" value="Por_Secre_tail"/>
    <property type="match status" value="1"/>
</dbReference>
<dbReference type="Pfam" id="PF18206">
    <property type="entry name" value="Porphyrn_cat_1"/>
    <property type="match status" value="1"/>
</dbReference>
<dbReference type="SUPFAM" id="SSF51445">
    <property type="entry name" value="(Trans)glycosidases"/>
    <property type="match status" value="1"/>
</dbReference>
<comment type="function">
    <text evidence="3 5">Endohydrolase that cleaves the beta-1,4 glycosidic bond between beta-D-galactopyranose-6-sulfate (G6S) and 3,6-anhydro-alpha-L-galactopyranose (LA) unit of funoran, a polysaccharide produced by red algae of the genus Gloiopeltis (PubMed:37479453). It releases the disaccharide LA-G6S as the predominant end product (PubMed:37479453). Also acts as a random endo-acting beta-agarase, which can hydrolyze agarose tetrasaccharides and hexasaccharides, and produces disaccharides as smallest products (PubMed:32578425). Besides typical agarose oligosaccharides, it can use methylated galactoses (PubMed:32578425). The enzyme exhibits higher catalytic efficiency towards agarose, but binds funoran preferentially (PubMed:37479453). Has no activity on porphyran (PubMed:37479453).</text>
</comment>
<comment type="catalytic activity">
    <reaction evidence="5">
        <text>Endohydrolysis of beta-(1-&gt;4)-linkages between beta-D-galactopyranose-6-sulfate and 3,6-anhydro-alpha-L-galactopyranose units in funoran.</text>
        <dbReference type="EC" id="3.2.1.222"/>
    </reaction>
</comment>
<comment type="catalytic activity">
    <reaction evidence="3">
        <text>Hydrolysis of (1-&gt;4)-beta-D-galactosidic linkages in agarose, giving the tetramer as the predominant product.</text>
        <dbReference type="EC" id="3.2.1.81"/>
    </reaction>
</comment>
<comment type="activity regulation">
    <text evidence="3">Agarase activity is enhanced in the presence of NaCl (PubMed:32578425). Agarase activity is significantly inhibited by Zn(2+) and slightly activated by several divalent ions including Mg(2+), Cd(2+) and Ca(2+) (PubMed:32578425).</text>
</comment>
<comment type="biophysicochemical properties">
    <kinetics>
        <KM evidence="5">7.07 uM for funoran</KM>
        <KM evidence="3">103.79 uM for agarose</KM>
        <Vmax evidence="5">2.97 umol/min/mg enzyme with funoran as substrate</Vmax>
        <Vmax evidence="3">136.99 umol/min/mg enzyme with agarose as substrate</Vmax>
        <text evidence="3 5">kcat is 3.95 sec(-1) with funoran as substrate (PubMed:37479453). kcat is 176.74 sec(-1) with agarose as substrate (PubMed:32578425).</text>
    </kinetics>
    <phDependence>
        <text evidence="3">Optimum pH is 6.5 with agarose as substrate (PubMed:32578425). Exhibits more than 80% of maximum enzymatic activity at a relatively broad pH range from 6.5 to 10.5 (PubMed:32578425).</text>
    </phDependence>
    <temperatureDependence>
        <text evidence="3">Optimum temperature is 30 degrees Celsius with agarose as substrate.</text>
    </temperatureDependence>
</comment>
<comment type="domain">
    <text evidence="4 5">An accommodation pocket formed by Phe-367, Tyr-280 and Gln-326 at subsite -1 (cleavage subsite) contributes to the methyl-galactose tolerance of Aga86A_Wa (PubMed:36746585). Docking simulations show that the canonical tetrasaccharide of funoran (LA-G6S)2 could adapt to the active cleft, and the G6S could be accommodated by the subsite -1 (PubMed:37479453).</text>
</comment>
<comment type="similarity">
    <text evidence="9">Belongs to the glycosyl hydrolase 86 family.</text>
</comment>
<keyword id="KW-0002">3D-structure</keyword>
<keyword id="KW-0119">Carbohydrate metabolism</keyword>
<keyword id="KW-0326">Glycosidase</keyword>
<keyword id="KW-0378">Hydrolase</keyword>
<keyword id="KW-0732">Signal</keyword>
<accession>A0A516RTC5</accession>
<protein>
    <recommendedName>
        <fullName evidence="8">Funoran endo-beta-hydrolase</fullName>
        <ecNumber evidence="5">3.2.1.222</ecNumber>
    </recommendedName>
    <alternativeName>
        <fullName evidence="6">Aga86A_Wa</fullName>
    </alternativeName>
    <alternativeName>
        <fullName evidence="6">Beta-agarase</fullName>
        <ecNumber evidence="3">3.2.1.81</ecNumber>
    </alternativeName>
    <alternativeName>
        <fullName evidence="7">Beta-funoranase</fullName>
    </alternativeName>
    <alternativeName>
        <fullName evidence="7">Funoran hydrolase</fullName>
    </alternativeName>
</protein>
<evidence type="ECO:0000250" key="1">
    <source>
        <dbReference type="UniProtKB" id="B5CY96"/>
    </source>
</evidence>
<evidence type="ECO:0000255" key="2"/>
<evidence type="ECO:0000269" key="3">
    <source>
    </source>
</evidence>
<evidence type="ECO:0000269" key="4">
    <source>
    </source>
</evidence>
<evidence type="ECO:0000269" key="5">
    <source>
    </source>
</evidence>
<evidence type="ECO:0000303" key="6">
    <source>
    </source>
</evidence>
<evidence type="ECO:0000303" key="7">
    <source>
    </source>
</evidence>
<evidence type="ECO:0000305" key="8"/>
<evidence type="ECO:0000305" key="9">
    <source>
    </source>
</evidence>
<evidence type="ECO:0007744" key="10">
    <source>
        <dbReference type="PDB" id="8H97"/>
    </source>
</evidence>
<evidence type="ECO:0007829" key="11">
    <source>
        <dbReference type="PDB" id="8H97"/>
    </source>
</evidence>
<name>AGA86_WENAE</name>